<name>MSCL_YERE8</name>
<organism>
    <name type="scientific">Yersinia enterocolitica serotype O:8 / biotype 1B (strain NCTC 13174 / 8081)</name>
    <dbReference type="NCBI Taxonomy" id="393305"/>
    <lineage>
        <taxon>Bacteria</taxon>
        <taxon>Pseudomonadati</taxon>
        <taxon>Pseudomonadota</taxon>
        <taxon>Gammaproteobacteria</taxon>
        <taxon>Enterobacterales</taxon>
        <taxon>Yersiniaceae</taxon>
        <taxon>Yersinia</taxon>
    </lineage>
</organism>
<proteinExistence type="inferred from homology"/>
<gene>
    <name evidence="1" type="primary">mscL</name>
    <name type="ordered locus">YE3893</name>
</gene>
<accession>A1JRZ6</accession>
<protein>
    <recommendedName>
        <fullName evidence="1">Large-conductance mechanosensitive channel</fullName>
    </recommendedName>
</protein>
<keyword id="KW-0997">Cell inner membrane</keyword>
<keyword id="KW-1003">Cell membrane</keyword>
<keyword id="KW-0407">Ion channel</keyword>
<keyword id="KW-0406">Ion transport</keyword>
<keyword id="KW-0472">Membrane</keyword>
<keyword id="KW-0812">Transmembrane</keyword>
<keyword id="KW-1133">Transmembrane helix</keyword>
<keyword id="KW-0813">Transport</keyword>
<feature type="chain" id="PRO_1000015434" description="Large-conductance mechanosensitive channel">
    <location>
        <begin position="1"/>
        <end position="136"/>
    </location>
</feature>
<feature type="transmembrane region" description="Helical" evidence="1">
    <location>
        <begin position="10"/>
        <end position="30"/>
    </location>
</feature>
<feature type="transmembrane region" description="Helical" evidence="1">
    <location>
        <begin position="76"/>
        <end position="96"/>
    </location>
</feature>
<dbReference type="EMBL" id="AM286415">
    <property type="protein sequence ID" value="CAL13912.1"/>
    <property type="molecule type" value="Genomic_DNA"/>
</dbReference>
<dbReference type="RefSeq" id="WP_005174607.1">
    <property type="nucleotide sequence ID" value="NC_008800.1"/>
</dbReference>
<dbReference type="RefSeq" id="YP_001008038.1">
    <property type="nucleotide sequence ID" value="NC_008800.1"/>
</dbReference>
<dbReference type="SMR" id="A1JRZ6"/>
<dbReference type="KEGG" id="yen:YE3893"/>
<dbReference type="PATRIC" id="fig|393305.7.peg.4143"/>
<dbReference type="eggNOG" id="COG1970">
    <property type="taxonomic scope" value="Bacteria"/>
</dbReference>
<dbReference type="HOGENOM" id="CLU_095787_0_0_6"/>
<dbReference type="OrthoDB" id="9810350at2"/>
<dbReference type="Proteomes" id="UP000000642">
    <property type="component" value="Chromosome"/>
</dbReference>
<dbReference type="GO" id="GO:0005886">
    <property type="term" value="C:plasma membrane"/>
    <property type="evidence" value="ECO:0007669"/>
    <property type="project" value="UniProtKB-SubCell"/>
</dbReference>
<dbReference type="GO" id="GO:0008381">
    <property type="term" value="F:mechanosensitive monoatomic ion channel activity"/>
    <property type="evidence" value="ECO:0007669"/>
    <property type="project" value="UniProtKB-UniRule"/>
</dbReference>
<dbReference type="FunFam" id="1.10.1200.120:FF:000001">
    <property type="entry name" value="Large-conductance mechanosensitive channel"/>
    <property type="match status" value="1"/>
</dbReference>
<dbReference type="Gene3D" id="1.10.1200.120">
    <property type="entry name" value="Large-conductance mechanosensitive channel, MscL, domain 1"/>
    <property type="match status" value="1"/>
</dbReference>
<dbReference type="HAMAP" id="MF_00115">
    <property type="entry name" value="MscL"/>
    <property type="match status" value="1"/>
</dbReference>
<dbReference type="InterPro" id="IPR019823">
    <property type="entry name" value="Mechanosensitive_channel_CS"/>
</dbReference>
<dbReference type="InterPro" id="IPR001185">
    <property type="entry name" value="MS_channel"/>
</dbReference>
<dbReference type="InterPro" id="IPR037673">
    <property type="entry name" value="MSC/AndL"/>
</dbReference>
<dbReference type="InterPro" id="IPR036019">
    <property type="entry name" value="MscL_channel"/>
</dbReference>
<dbReference type="NCBIfam" id="TIGR00220">
    <property type="entry name" value="mscL"/>
    <property type="match status" value="1"/>
</dbReference>
<dbReference type="NCBIfam" id="NF001841">
    <property type="entry name" value="PRK00567.1-1"/>
    <property type="match status" value="1"/>
</dbReference>
<dbReference type="NCBIfam" id="NF001843">
    <property type="entry name" value="PRK00567.1-4"/>
    <property type="match status" value="1"/>
</dbReference>
<dbReference type="PANTHER" id="PTHR30266:SF2">
    <property type="entry name" value="LARGE-CONDUCTANCE MECHANOSENSITIVE CHANNEL"/>
    <property type="match status" value="1"/>
</dbReference>
<dbReference type="PANTHER" id="PTHR30266">
    <property type="entry name" value="MECHANOSENSITIVE CHANNEL MSCL"/>
    <property type="match status" value="1"/>
</dbReference>
<dbReference type="Pfam" id="PF01741">
    <property type="entry name" value="MscL"/>
    <property type="match status" value="1"/>
</dbReference>
<dbReference type="PRINTS" id="PR01264">
    <property type="entry name" value="MECHCHANNEL"/>
</dbReference>
<dbReference type="SUPFAM" id="SSF81330">
    <property type="entry name" value="Gated mechanosensitive channel"/>
    <property type="match status" value="1"/>
</dbReference>
<dbReference type="PROSITE" id="PS01327">
    <property type="entry name" value="MSCL"/>
    <property type="match status" value="1"/>
</dbReference>
<reference key="1">
    <citation type="journal article" date="2006" name="PLoS Genet.">
        <title>The complete genome sequence and comparative genome analysis of the high pathogenicity Yersinia enterocolitica strain 8081.</title>
        <authorList>
            <person name="Thomson N.R."/>
            <person name="Howard S."/>
            <person name="Wren B.W."/>
            <person name="Holden M.T.G."/>
            <person name="Crossman L."/>
            <person name="Challis G.L."/>
            <person name="Churcher C."/>
            <person name="Mungall K."/>
            <person name="Brooks K."/>
            <person name="Chillingworth T."/>
            <person name="Feltwell T."/>
            <person name="Abdellah Z."/>
            <person name="Hauser H."/>
            <person name="Jagels K."/>
            <person name="Maddison M."/>
            <person name="Moule S."/>
            <person name="Sanders M."/>
            <person name="Whitehead S."/>
            <person name="Quail M.A."/>
            <person name="Dougan G."/>
            <person name="Parkhill J."/>
            <person name="Prentice M.B."/>
        </authorList>
    </citation>
    <scope>NUCLEOTIDE SEQUENCE [LARGE SCALE GENOMIC DNA]</scope>
    <source>
        <strain>NCTC 13174 / 8081</strain>
    </source>
</reference>
<comment type="function">
    <text evidence="1">Channel that opens in response to stretch forces in the membrane lipid bilayer. May participate in the regulation of osmotic pressure changes within the cell.</text>
</comment>
<comment type="subunit">
    <text evidence="1">Homopentamer.</text>
</comment>
<comment type="subcellular location">
    <subcellularLocation>
        <location evidence="1">Cell inner membrane</location>
        <topology evidence="1">Multi-pass membrane protein</topology>
    </subcellularLocation>
</comment>
<comment type="similarity">
    <text evidence="1">Belongs to the MscL family.</text>
</comment>
<sequence>MSFMKEFREFAMRGNVVDLAVGVIIGAAFGRIVSSLVADIIMPPLGLLLGGVDFKQFHFVLRAAEGNIPAVVMNYGSFIQSVFDFVIVALAIFSAVKLMNKLRREKAEEPAAPPAPTTEEKLLAEIRDLLKAQQQK</sequence>
<evidence type="ECO:0000255" key="1">
    <source>
        <dbReference type="HAMAP-Rule" id="MF_00115"/>
    </source>
</evidence>